<sequence>MEMTSTQRLILANQYKLMGLLDSQNAQKYQRLEAIVKGGFALELKELDKEFSDVSEQECQTVLDTLEMYNALQTSYNNLSDKSALTPHRLQFAGYCAVREKKYLNYLRFITGVEGKYQEFMRCEHGCDSQVPMWDKYMRMLDVWHACPHGYHLSMTEIQNILNA</sequence>
<name>Y1500_PASMU</name>
<evidence type="ECO:0000255" key="1">
    <source>
        <dbReference type="HAMAP-Rule" id="MF_00762"/>
    </source>
</evidence>
<feature type="chain" id="PRO_0000218166" description="UPF0304 protein PM1500">
    <location>
        <begin position="1"/>
        <end position="164"/>
    </location>
</feature>
<organism>
    <name type="scientific">Pasteurella multocida (strain Pm70)</name>
    <dbReference type="NCBI Taxonomy" id="272843"/>
    <lineage>
        <taxon>Bacteria</taxon>
        <taxon>Pseudomonadati</taxon>
        <taxon>Pseudomonadota</taxon>
        <taxon>Gammaproteobacteria</taxon>
        <taxon>Pasteurellales</taxon>
        <taxon>Pasteurellaceae</taxon>
        <taxon>Pasteurella</taxon>
    </lineage>
</organism>
<comment type="similarity">
    <text evidence="1">Belongs to the UPF0304 family.</text>
</comment>
<keyword id="KW-1185">Reference proteome</keyword>
<gene>
    <name type="ordered locus">PM1500</name>
</gene>
<accession>Q9CKV5</accession>
<dbReference type="EMBL" id="AE004439">
    <property type="protein sequence ID" value="AAK03584.1"/>
    <property type="molecule type" value="Genomic_DNA"/>
</dbReference>
<dbReference type="RefSeq" id="WP_005718061.1">
    <property type="nucleotide sequence ID" value="NC_002663.1"/>
</dbReference>
<dbReference type="SMR" id="Q9CKV5"/>
<dbReference type="STRING" id="272843.PM1500"/>
<dbReference type="EnsemblBacteria" id="AAK03584">
    <property type="protein sequence ID" value="AAK03584"/>
    <property type="gene ID" value="PM1500"/>
</dbReference>
<dbReference type="KEGG" id="pmu:PM1500"/>
<dbReference type="HOGENOM" id="CLU_101021_1_0_6"/>
<dbReference type="OrthoDB" id="5589463at2"/>
<dbReference type="Proteomes" id="UP000000809">
    <property type="component" value="Chromosome"/>
</dbReference>
<dbReference type="Gene3D" id="1.10.287.680">
    <property type="entry name" value="Helix hairpin bin"/>
    <property type="match status" value="1"/>
</dbReference>
<dbReference type="Gene3D" id="1.10.3190.10">
    <property type="entry name" value="yfbu gene product, domain 2"/>
    <property type="match status" value="1"/>
</dbReference>
<dbReference type="HAMAP" id="MF_00762">
    <property type="entry name" value="UPF0304"/>
    <property type="match status" value="1"/>
</dbReference>
<dbReference type="InterPro" id="IPR005587">
    <property type="entry name" value="UPF0304_YfbU"/>
</dbReference>
<dbReference type="InterPro" id="IPR023146">
    <property type="entry name" value="YfbU_alpha-helical_sf"/>
</dbReference>
<dbReference type="InterPro" id="IPR023145">
    <property type="entry name" value="YfbU_helix-hairpin_sf"/>
</dbReference>
<dbReference type="NCBIfam" id="NF003936">
    <property type="entry name" value="PRK05445.1"/>
    <property type="match status" value="1"/>
</dbReference>
<dbReference type="Pfam" id="PF03887">
    <property type="entry name" value="YfbU"/>
    <property type="match status" value="1"/>
</dbReference>
<dbReference type="PIRSF" id="PIRSF006272">
    <property type="entry name" value="UCP006272"/>
    <property type="match status" value="1"/>
</dbReference>
<dbReference type="SUPFAM" id="SSF116960">
    <property type="entry name" value="YfbU-like"/>
    <property type="match status" value="1"/>
</dbReference>
<protein>
    <recommendedName>
        <fullName evidence="1">UPF0304 protein PM1500</fullName>
    </recommendedName>
</protein>
<proteinExistence type="inferred from homology"/>
<reference key="1">
    <citation type="journal article" date="2001" name="Proc. Natl. Acad. Sci. U.S.A.">
        <title>Complete genomic sequence of Pasteurella multocida Pm70.</title>
        <authorList>
            <person name="May B.J."/>
            <person name="Zhang Q."/>
            <person name="Li L.L."/>
            <person name="Paustian M.L."/>
            <person name="Whittam T.S."/>
            <person name="Kapur V."/>
        </authorList>
    </citation>
    <scope>NUCLEOTIDE SEQUENCE [LARGE SCALE GENOMIC DNA]</scope>
    <source>
        <strain>Pm70</strain>
    </source>
</reference>